<reference key="1">
    <citation type="journal article" date="2012" name="Environ. Microbiol.">
        <title>The genome sequence of Desulfatibacillum alkenivorans AK-01: a blueprint for anaerobic alkane oxidation.</title>
        <authorList>
            <person name="Callaghan A.V."/>
            <person name="Morris B.E."/>
            <person name="Pereira I.A."/>
            <person name="McInerney M.J."/>
            <person name="Austin R.N."/>
            <person name="Groves J.T."/>
            <person name="Kukor J.J."/>
            <person name="Suflita J.M."/>
            <person name="Young L.Y."/>
            <person name="Zylstra G.J."/>
            <person name="Wawrik B."/>
        </authorList>
    </citation>
    <scope>NUCLEOTIDE SEQUENCE [LARGE SCALE GENOMIC DNA]</scope>
    <source>
        <strain>AK-01</strain>
    </source>
</reference>
<protein>
    <recommendedName>
        <fullName evidence="1">tRNA dimethylallyltransferase</fullName>
        <ecNumber evidence="1">2.5.1.75</ecNumber>
    </recommendedName>
    <alternativeName>
        <fullName evidence="1">Dimethylallyl diphosphate:tRNA dimethylallyltransferase</fullName>
        <shortName evidence="1">DMAPP:tRNA dimethylallyltransferase</shortName>
        <shortName evidence="1">DMATase</shortName>
    </alternativeName>
    <alternativeName>
        <fullName evidence="1">Isopentenyl-diphosphate:tRNA isopentenyltransferase</fullName>
        <shortName evidence="1">IPP transferase</shortName>
        <shortName evidence="1">IPPT</shortName>
        <shortName evidence="1">IPTase</shortName>
    </alternativeName>
</protein>
<gene>
    <name evidence="1" type="primary">miaA</name>
    <name type="ordered locus">Dalk_4638</name>
</gene>
<organism>
    <name type="scientific">Desulfatibacillum aliphaticivorans</name>
    <dbReference type="NCBI Taxonomy" id="218208"/>
    <lineage>
        <taxon>Bacteria</taxon>
        <taxon>Pseudomonadati</taxon>
        <taxon>Thermodesulfobacteriota</taxon>
        <taxon>Desulfobacteria</taxon>
        <taxon>Desulfobacterales</taxon>
        <taxon>Desulfatibacillaceae</taxon>
        <taxon>Desulfatibacillum</taxon>
    </lineage>
</organism>
<feature type="chain" id="PRO_0000377141" description="tRNA dimethylallyltransferase">
    <location>
        <begin position="1"/>
        <end position="306"/>
    </location>
</feature>
<feature type="binding site" evidence="1">
    <location>
        <begin position="12"/>
        <end position="19"/>
    </location>
    <ligand>
        <name>ATP</name>
        <dbReference type="ChEBI" id="CHEBI:30616"/>
    </ligand>
</feature>
<feature type="binding site" evidence="1">
    <location>
        <begin position="14"/>
        <end position="19"/>
    </location>
    <ligand>
        <name>substrate</name>
    </ligand>
</feature>
<feature type="site" description="Interaction with substrate tRNA" evidence="1">
    <location>
        <position position="103"/>
    </location>
</feature>
<feature type="site" description="Interaction with substrate tRNA" evidence="1">
    <location>
        <position position="125"/>
    </location>
</feature>
<keyword id="KW-0067">ATP-binding</keyword>
<keyword id="KW-0460">Magnesium</keyword>
<keyword id="KW-0547">Nucleotide-binding</keyword>
<keyword id="KW-1185">Reference proteome</keyword>
<keyword id="KW-0808">Transferase</keyword>
<keyword id="KW-0819">tRNA processing</keyword>
<dbReference type="EC" id="2.5.1.75" evidence="1"/>
<dbReference type="EMBL" id="CP001322">
    <property type="protein sequence ID" value="ACL06316.1"/>
    <property type="molecule type" value="Genomic_DNA"/>
</dbReference>
<dbReference type="RefSeq" id="WP_015949355.1">
    <property type="nucleotide sequence ID" value="NC_011768.1"/>
</dbReference>
<dbReference type="SMR" id="B8FNN5"/>
<dbReference type="KEGG" id="dal:Dalk_4638"/>
<dbReference type="eggNOG" id="COG0324">
    <property type="taxonomic scope" value="Bacteria"/>
</dbReference>
<dbReference type="HOGENOM" id="CLU_032616_0_1_7"/>
<dbReference type="Proteomes" id="UP000000739">
    <property type="component" value="Chromosome"/>
</dbReference>
<dbReference type="GO" id="GO:0005524">
    <property type="term" value="F:ATP binding"/>
    <property type="evidence" value="ECO:0007669"/>
    <property type="project" value="UniProtKB-UniRule"/>
</dbReference>
<dbReference type="GO" id="GO:0052381">
    <property type="term" value="F:tRNA dimethylallyltransferase activity"/>
    <property type="evidence" value="ECO:0007669"/>
    <property type="project" value="UniProtKB-UniRule"/>
</dbReference>
<dbReference type="GO" id="GO:0006400">
    <property type="term" value="P:tRNA modification"/>
    <property type="evidence" value="ECO:0007669"/>
    <property type="project" value="TreeGrafter"/>
</dbReference>
<dbReference type="FunFam" id="1.10.20.140:FF:000001">
    <property type="entry name" value="tRNA dimethylallyltransferase"/>
    <property type="match status" value="1"/>
</dbReference>
<dbReference type="Gene3D" id="1.10.20.140">
    <property type="match status" value="1"/>
</dbReference>
<dbReference type="Gene3D" id="3.40.50.300">
    <property type="entry name" value="P-loop containing nucleotide triphosphate hydrolases"/>
    <property type="match status" value="1"/>
</dbReference>
<dbReference type="HAMAP" id="MF_00185">
    <property type="entry name" value="IPP_trans"/>
    <property type="match status" value="1"/>
</dbReference>
<dbReference type="InterPro" id="IPR039657">
    <property type="entry name" value="Dimethylallyltransferase"/>
</dbReference>
<dbReference type="InterPro" id="IPR018022">
    <property type="entry name" value="IPT"/>
</dbReference>
<dbReference type="InterPro" id="IPR027417">
    <property type="entry name" value="P-loop_NTPase"/>
</dbReference>
<dbReference type="NCBIfam" id="TIGR00174">
    <property type="entry name" value="miaA"/>
    <property type="match status" value="1"/>
</dbReference>
<dbReference type="PANTHER" id="PTHR11088">
    <property type="entry name" value="TRNA DIMETHYLALLYLTRANSFERASE"/>
    <property type="match status" value="1"/>
</dbReference>
<dbReference type="PANTHER" id="PTHR11088:SF60">
    <property type="entry name" value="TRNA DIMETHYLALLYLTRANSFERASE"/>
    <property type="match status" value="1"/>
</dbReference>
<dbReference type="Pfam" id="PF01715">
    <property type="entry name" value="IPPT"/>
    <property type="match status" value="1"/>
</dbReference>
<dbReference type="SUPFAM" id="SSF52540">
    <property type="entry name" value="P-loop containing nucleoside triphosphate hydrolases"/>
    <property type="match status" value="2"/>
</dbReference>
<name>MIAA_DESAL</name>
<proteinExistence type="inferred from homology"/>
<sequence length="306" mass="34589">MPSKEKIVVIAGPTGVGKSASTLPLAREFGGEIISADAVSVYRCLDIGAAKPGMEDRRLVPHHMIDVVDPDEDFDANIYAAQARAIAQSLHESDKRVFVDGGTGFYIKALLYGLFTEGRSDPELRDSLRREAAQLGSHALHDRLKDLDPPSAKRIHPNDAYRITRALEICILTGKPASAQQAAHGFEESPYDVLFFCLHREREILYQRTDQRVDQMLAMGLEQEVRGLLENGYGPELKSMQSIGYRHMCQYITGALNYEDAVTLMKRDTRRLAKRQMTWFKAYPEIRWMAPDETEAMRREISLFLE</sequence>
<evidence type="ECO:0000255" key="1">
    <source>
        <dbReference type="HAMAP-Rule" id="MF_00185"/>
    </source>
</evidence>
<accession>B8FNN5</accession>
<comment type="function">
    <text evidence="1">Catalyzes the transfer of a dimethylallyl group onto the adenine at position 37 in tRNAs that read codons beginning with uridine, leading to the formation of N6-(dimethylallyl)adenosine (i(6)A).</text>
</comment>
<comment type="catalytic activity">
    <reaction evidence="1">
        <text>adenosine(37) in tRNA + dimethylallyl diphosphate = N(6)-dimethylallyladenosine(37) in tRNA + diphosphate</text>
        <dbReference type="Rhea" id="RHEA:26482"/>
        <dbReference type="Rhea" id="RHEA-COMP:10162"/>
        <dbReference type="Rhea" id="RHEA-COMP:10375"/>
        <dbReference type="ChEBI" id="CHEBI:33019"/>
        <dbReference type="ChEBI" id="CHEBI:57623"/>
        <dbReference type="ChEBI" id="CHEBI:74411"/>
        <dbReference type="ChEBI" id="CHEBI:74415"/>
        <dbReference type="EC" id="2.5.1.75"/>
    </reaction>
</comment>
<comment type="cofactor">
    <cofactor evidence="1">
        <name>Mg(2+)</name>
        <dbReference type="ChEBI" id="CHEBI:18420"/>
    </cofactor>
</comment>
<comment type="subunit">
    <text evidence="1">Monomer.</text>
</comment>
<comment type="similarity">
    <text evidence="1">Belongs to the IPP transferase family.</text>
</comment>